<dbReference type="EMBL" id="CP000282">
    <property type="protein sequence ID" value="ABD80948.1"/>
    <property type="molecule type" value="Genomic_DNA"/>
</dbReference>
<dbReference type="RefSeq" id="WP_011468168.1">
    <property type="nucleotide sequence ID" value="NC_007912.1"/>
</dbReference>
<dbReference type="SMR" id="Q21K31"/>
<dbReference type="STRING" id="203122.Sde_1688"/>
<dbReference type="GeneID" id="98613363"/>
<dbReference type="KEGG" id="sde:Sde_1688"/>
<dbReference type="eggNOG" id="COG0361">
    <property type="taxonomic scope" value="Bacteria"/>
</dbReference>
<dbReference type="HOGENOM" id="CLU_151267_1_0_6"/>
<dbReference type="OrthoDB" id="9803250at2"/>
<dbReference type="Proteomes" id="UP000001947">
    <property type="component" value="Chromosome"/>
</dbReference>
<dbReference type="GO" id="GO:0005829">
    <property type="term" value="C:cytosol"/>
    <property type="evidence" value="ECO:0007669"/>
    <property type="project" value="TreeGrafter"/>
</dbReference>
<dbReference type="GO" id="GO:0043022">
    <property type="term" value="F:ribosome binding"/>
    <property type="evidence" value="ECO:0007669"/>
    <property type="project" value="UniProtKB-UniRule"/>
</dbReference>
<dbReference type="GO" id="GO:0019843">
    <property type="term" value="F:rRNA binding"/>
    <property type="evidence" value="ECO:0007669"/>
    <property type="project" value="UniProtKB-UniRule"/>
</dbReference>
<dbReference type="GO" id="GO:0003743">
    <property type="term" value="F:translation initiation factor activity"/>
    <property type="evidence" value="ECO:0007669"/>
    <property type="project" value="UniProtKB-UniRule"/>
</dbReference>
<dbReference type="CDD" id="cd04451">
    <property type="entry name" value="S1_IF1"/>
    <property type="match status" value="1"/>
</dbReference>
<dbReference type="FunFam" id="2.40.50.140:FF:000002">
    <property type="entry name" value="Translation initiation factor IF-1"/>
    <property type="match status" value="1"/>
</dbReference>
<dbReference type="Gene3D" id="2.40.50.140">
    <property type="entry name" value="Nucleic acid-binding proteins"/>
    <property type="match status" value="1"/>
</dbReference>
<dbReference type="HAMAP" id="MF_00075">
    <property type="entry name" value="IF_1"/>
    <property type="match status" value="1"/>
</dbReference>
<dbReference type="InterPro" id="IPR012340">
    <property type="entry name" value="NA-bd_OB-fold"/>
</dbReference>
<dbReference type="InterPro" id="IPR006196">
    <property type="entry name" value="RNA-binding_domain_S1_IF1"/>
</dbReference>
<dbReference type="InterPro" id="IPR003029">
    <property type="entry name" value="S1_domain"/>
</dbReference>
<dbReference type="InterPro" id="IPR004368">
    <property type="entry name" value="TIF_IF1"/>
</dbReference>
<dbReference type="NCBIfam" id="TIGR00008">
    <property type="entry name" value="infA"/>
    <property type="match status" value="1"/>
</dbReference>
<dbReference type="PANTHER" id="PTHR33370">
    <property type="entry name" value="TRANSLATION INITIATION FACTOR IF-1, CHLOROPLASTIC"/>
    <property type="match status" value="1"/>
</dbReference>
<dbReference type="PANTHER" id="PTHR33370:SF1">
    <property type="entry name" value="TRANSLATION INITIATION FACTOR IF-1, CHLOROPLASTIC"/>
    <property type="match status" value="1"/>
</dbReference>
<dbReference type="Pfam" id="PF01176">
    <property type="entry name" value="eIF-1a"/>
    <property type="match status" value="1"/>
</dbReference>
<dbReference type="SMART" id="SM00316">
    <property type="entry name" value="S1"/>
    <property type="match status" value="1"/>
</dbReference>
<dbReference type="SUPFAM" id="SSF50249">
    <property type="entry name" value="Nucleic acid-binding proteins"/>
    <property type="match status" value="1"/>
</dbReference>
<dbReference type="PROSITE" id="PS50832">
    <property type="entry name" value="S1_IF1_TYPE"/>
    <property type="match status" value="1"/>
</dbReference>
<evidence type="ECO:0000255" key="1">
    <source>
        <dbReference type="HAMAP-Rule" id="MF_00075"/>
    </source>
</evidence>
<keyword id="KW-0963">Cytoplasm</keyword>
<keyword id="KW-0396">Initiation factor</keyword>
<keyword id="KW-0648">Protein biosynthesis</keyword>
<keyword id="KW-1185">Reference proteome</keyword>
<keyword id="KW-0694">RNA-binding</keyword>
<keyword id="KW-0699">rRNA-binding</keyword>
<name>IF1_SACD2</name>
<gene>
    <name evidence="1" type="primary">infA</name>
    <name type="ordered locus">Sde_1688</name>
</gene>
<accession>Q21K31</accession>
<protein>
    <recommendedName>
        <fullName evidence="1">Translation initiation factor IF-1</fullName>
    </recommendedName>
</protein>
<feature type="chain" id="PRO_0000263864" description="Translation initiation factor IF-1">
    <location>
        <begin position="1"/>
        <end position="72"/>
    </location>
</feature>
<feature type="domain" description="S1-like" evidence="1">
    <location>
        <begin position="1"/>
        <end position="72"/>
    </location>
</feature>
<reference key="1">
    <citation type="journal article" date="2008" name="PLoS Genet.">
        <title>Complete genome sequence of the complex carbohydrate-degrading marine bacterium, Saccharophagus degradans strain 2-40 T.</title>
        <authorList>
            <person name="Weiner R.M."/>
            <person name="Taylor L.E. II"/>
            <person name="Henrissat B."/>
            <person name="Hauser L."/>
            <person name="Land M."/>
            <person name="Coutinho P.M."/>
            <person name="Rancurel C."/>
            <person name="Saunders E.H."/>
            <person name="Longmire A.G."/>
            <person name="Zhang H."/>
            <person name="Bayer E.A."/>
            <person name="Gilbert H.J."/>
            <person name="Larimer F."/>
            <person name="Zhulin I.B."/>
            <person name="Ekborg N.A."/>
            <person name="Lamed R."/>
            <person name="Richardson P.M."/>
            <person name="Borovok I."/>
            <person name="Hutcheson S."/>
        </authorList>
    </citation>
    <scope>NUCLEOTIDE SEQUENCE [LARGE SCALE GENOMIC DNA]</scope>
    <source>
        <strain>2-40 / ATCC 43961 / DSM 17024</strain>
    </source>
</reference>
<proteinExistence type="inferred from homology"/>
<comment type="function">
    <text evidence="1">One of the essential components for the initiation of protein synthesis. Stabilizes the binding of IF-2 and IF-3 on the 30S subunit to which N-formylmethionyl-tRNA(fMet) subsequently binds. Helps modulate mRNA selection, yielding the 30S pre-initiation complex (PIC). Upon addition of the 50S ribosomal subunit IF-1, IF-2 and IF-3 are released leaving the mature 70S translation initiation complex.</text>
</comment>
<comment type="subunit">
    <text evidence="1">Component of the 30S ribosomal translation pre-initiation complex which assembles on the 30S ribosome in the order IF-2 and IF-3, IF-1 and N-formylmethionyl-tRNA(fMet); mRNA recruitment can occur at any time during PIC assembly.</text>
</comment>
<comment type="subcellular location">
    <subcellularLocation>
        <location evidence="1">Cytoplasm</location>
    </subcellularLocation>
</comment>
<comment type="similarity">
    <text evidence="1">Belongs to the IF-1 family.</text>
</comment>
<organism>
    <name type="scientific">Saccharophagus degradans (strain 2-40 / ATCC 43961 / DSM 17024)</name>
    <dbReference type="NCBI Taxonomy" id="203122"/>
    <lineage>
        <taxon>Bacteria</taxon>
        <taxon>Pseudomonadati</taxon>
        <taxon>Pseudomonadota</taxon>
        <taxon>Gammaproteobacteria</taxon>
        <taxon>Cellvibrionales</taxon>
        <taxon>Cellvibrionaceae</taxon>
        <taxon>Saccharophagus</taxon>
    </lineage>
</organism>
<sequence length="72" mass="8297">MAKEDNFELEGEVIDTLPNTTFRVKLENGHVVTAHISGKMRKNYIRILTGDKVKVEMTPYDLSKGRITYRAR</sequence>